<feature type="chain" id="PRO_0000144801" description="V-type proton ATPase subunit F">
    <location>
        <begin position="1"/>
        <end position="119"/>
    </location>
</feature>
<sequence>MAGRGKLIAVIGDEDTVTGFLLGGIGELNKNRHPNFLVVEKDTTINEIEDTFRQFLNRDDIGIILINQYIAEMVRHALDAHQRSIPAVLEIPSKEHPYDAAKDSILRRAKGMFTAEDLR</sequence>
<organism>
    <name type="scientific">Rattus norvegicus</name>
    <name type="common">Rat</name>
    <dbReference type="NCBI Taxonomy" id="10116"/>
    <lineage>
        <taxon>Eukaryota</taxon>
        <taxon>Metazoa</taxon>
        <taxon>Chordata</taxon>
        <taxon>Craniata</taxon>
        <taxon>Vertebrata</taxon>
        <taxon>Euteleostomi</taxon>
        <taxon>Mammalia</taxon>
        <taxon>Eutheria</taxon>
        <taxon>Euarchontoglires</taxon>
        <taxon>Glires</taxon>
        <taxon>Rodentia</taxon>
        <taxon>Myomorpha</taxon>
        <taxon>Muroidea</taxon>
        <taxon>Muridae</taxon>
        <taxon>Murinae</taxon>
        <taxon>Rattus</taxon>
    </lineage>
</organism>
<keyword id="KW-0002">3D-structure</keyword>
<keyword id="KW-0968">Cytoplasmic vesicle</keyword>
<keyword id="KW-0903">Direct protein sequencing</keyword>
<keyword id="KW-0375">Hydrogen ion transport</keyword>
<keyword id="KW-0406">Ion transport</keyword>
<keyword id="KW-0472">Membrane</keyword>
<keyword id="KW-1185">Reference proteome</keyword>
<keyword id="KW-0770">Synapse</keyword>
<keyword id="KW-0813">Transport</keyword>
<name>VATF_RAT</name>
<comment type="function">
    <text evidence="1">Subunit of the V1 complex of vacuolar(H+)-ATPase (V-ATPase), a multisubunit enzyme composed of a peripheral complex (V1) that hydrolyzes ATP and a membrane integral complex (V0) that translocates protons (PubMed:32165585). V-ATPase is responsible for acidifying and maintaining the pH of intracellular compartments and in some cell types, is targeted to the plasma membrane, where it is responsible for acidifying the extracellular environment (PubMed:32165585).</text>
</comment>
<comment type="subunit">
    <text evidence="1">V-ATPase is a heteromultimeric enzyme made up of two complexes: the ATP-hydrolytic V1 complex and the proton translocation V0 complex (PubMed:32165585). The V1 complex consists of three catalytic AB heterodimers that form a heterohexamer, three peripheral stalks each consisting of EG heterodimers, one central rotor including subunits D and F, and the regulatory subunits C and H (PubMed:32165585). The proton translocation complex V0 consists of the proton transport subunit a, a ring of proteolipid subunits c9c'', rotary subunit d, subunits e and f, and the accessory subunits ATP6AP1/Ac45 and ATP6AP2/PRR (PubMed:32165585).</text>
</comment>
<comment type="subcellular location">
    <subcellularLocation>
        <location evidence="1">Cytoplasmic vesicle</location>
        <location evidence="1">Secretory vesicle</location>
        <location evidence="1">Synaptic vesicle membrane</location>
        <topology evidence="2">Peripheral membrane protein</topology>
    </subcellularLocation>
    <subcellularLocation>
        <location evidence="1">Cytoplasmic vesicle</location>
        <location evidence="1">Clathrin-coated vesicle membrane</location>
        <topology evidence="2">Peripheral membrane protein</topology>
    </subcellularLocation>
</comment>
<comment type="tissue specificity">
    <text evidence="1">Expressed in brain (at protein level).</text>
</comment>
<comment type="similarity">
    <text evidence="2">Belongs to the V-ATPase F subunit family.</text>
</comment>
<gene>
    <name type="primary">Atp6v1f</name>
    <name type="synonym">Atp6s14</name>
    <name type="synonym">Vatf</name>
</gene>
<evidence type="ECO:0000269" key="1">
    <source>
    </source>
</evidence>
<evidence type="ECO:0000305" key="2"/>
<evidence type="ECO:0007744" key="3">
    <source>
        <dbReference type="PDB" id="6VQ6"/>
    </source>
</evidence>
<evidence type="ECO:0007744" key="4">
    <source>
        <dbReference type="PDB" id="6VQ7"/>
    </source>
</evidence>
<evidence type="ECO:0007744" key="5">
    <source>
        <dbReference type="PDB" id="6VQ8"/>
    </source>
</evidence>
<evidence type="ECO:0007744" key="6">
    <source>
        <dbReference type="PDB" id="6VQC"/>
    </source>
</evidence>
<evidence type="ECO:0007744" key="7">
    <source>
        <dbReference type="PDB" id="6VQG"/>
    </source>
</evidence>
<evidence type="ECO:0007744" key="8">
    <source>
        <dbReference type="PDB" id="6VQH"/>
    </source>
</evidence>
<dbReference type="EMBL" id="U43175">
    <property type="protein sequence ID" value="AAB03684.1"/>
    <property type="molecule type" value="mRNA"/>
</dbReference>
<dbReference type="RefSeq" id="NP_446336.1">
    <property type="nucleotide sequence ID" value="NM_053884.2"/>
</dbReference>
<dbReference type="PDB" id="6VQ6">
    <property type="method" value="EM"/>
    <property type="resolution" value="3.90 A"/>
    <property type="chains" value="L=1-119"/>
</dbReference>
<dbReference type="PDB" id="6VQ7">
    <property type="method" value="EM"/>
    <property type="resolution" value="4.00 A"/>
    <property type="chains" value="L=1-119"/>
</dbReference>
<dbReference type="PDB" id="6VQ8">
    <property type="method" value="EM"/>
    <property type="resolution" value="3.90 A"/>
    <property type="chains" value="L=1-119"/>
</dbReference>
<dbReference type="PDB" id="6VQC">
    <property type="method" value="EM"/>
    <property type="resolution" value="3.80 A"/>
    <property type="chains" value="L=1-119"/>
</dbReference>
<dbReference type="PDB" id="6VQG">
    <property type="method" value="EM"/>
    <property type="resolution" value="4.20 A"/>
    <property type="chains" value="L=1-119"/>
</dbReference>
<dbReference type="PDB" id="6VQH">
    <property type="method" value="EM"/>
    <property type="resolution" value="4.40 A"/>
    <property type="chains" value="L=1-119"/>
</dbReference>
<dbReference type="PDB" id="7UZF">
    <property type="method" value="EM"/>
    <property type="resolution" value="3.80 A"/>
    <property type="chains" value="L=1-119"/>
</dbReference>
<dbReference type="PDB" id="7UZG">
    <property type="method" value="EM"/>
    <property type="resolution" value="3.70 A"/>
    <property type="chains" value="L=1-119"/>
</dbReference>
<dbReference type="PDB" id="7UZH">
    <property type="method" value="EM"/>
    <property type="resolution" value="3.80 A"/>
    <property type="chains" value="L=1-119"/>
</dbReference>
<dbReference type="PDB" id="7UZI">
    <property type="method" value="EM"/>
    <property type="resolution" value="3.90 A"/>
    <property type="chains" value="L=1-119"/>
</dbReference>
<dbReference type="PDB" id="7UZJ">
    <property type="method" value="EM"/>
    <property type="resolution" value="3.30 A"/>
    <property type="chains" value="L=1-119"/>
</dbReference>
<dbReference type="PDB" id="7UZK">
    <property type="method" value="EM"/>
    <property type="resolution" value="3.00 A"/>
    <property type="chains" value="L=1-119"/>
</dbReference>
<dbReference type="PDB" id="9B8O">
    <property type="method" value="EM"/>
    <property type="resolution" value="3.20 A"/>
    <property type="chains" value="L=1-119"/>
</dbReference>
<dbReference type="PDB" id="9B8P">
    <property type="method" value="EM"/>
    <property type="resolution" value="3.20 A"/>
    <property type="chains" value="L=1-119"/>
</dbReference>
<dbReference type="PDB" id="9BRB">
    <property type="method" value="EM"/>
    <property type="resolution" value="3.60 A"/>
    <property type="chains" value="L=1-119"/>
</dbReference>
<dbReference type="PDB" id="9BRC">
    <property type="method" value="EM"/>
    <property type="resolution" value="3.90 A"/>
    <property type="chains" value="L=1-119"/>
</dbReference>
<dbReference type="PDB" id="9BRD">
    <property type="method" value="EM"/>
    <property type="resolution" value="3.50 A"/>
    <property type="chains" value="L=1-119"/>
</dbReference>
<dbReference type="PDBsum" id="6VQ6"/>
<dbReference type="PDBsum" id="6VQ7"/>
<dbReference type="PDBsum" id="6VQ8"/>
<dbReference type="PDBsum" id="6VQC"/>
<dbReference type="PDBsum" id="6VQG"/>
<dbReference type="PDBsum" id="6VQH"/>
<dbReference type="PDBsum" id="7UZF"/>
<dbReference type="PDBsum" id="7UZG"/>
<dbReference type="PDBsum" id="7UZH"/>
<dbReference type="PDBsum" id="7UZI"/>
<dbReference type="PDBsum" id="7UZJ"/>
<dbReference type="PDBsum" id="7UZK"/>
<dbReference type="PDBsum" id="9B8O"/>
<dbReference type="PDBsum" id="9B8P"/>
<dbReference type="PDBsum" id="9BRB"/>
<dbReference type="PDBsum" id="9BRC"/>
<dbReference type="PDBsum" id="9BRD"/>
<dbReference type="EMDB" id="EMD-21348"/>
<dbReference type="EMDB" id="EMD-21349"/>
<dbReference type="EMDB" id="EMD-21350"/>
<dbReference type="EMDB" id="EMD-26909"/>
<dbReference type="EMDB" id="EMD-26910"/>
<dbReference type="EMDB" id="EMD-26911"/>
<dbReference type="EMDB" id="EMD-26912"/>
<dbReference type="EMDB" id="EMD-26913"/>
<dbReference type="EMDB" id="EMD-26914"/>
<dbReference type="EMDB" id="EMD-44350"/>
<dbReference type="EMDB" id="EMD-44351"/>
<dbReference type="SMR" id="P50408"/>
<dbReference type="CORUM" id="P50408"/>
<dbReference type="FunCoup" id="P50408">
    <property type="interactions" value="2174"/>
</dbReference>
<dbReference type="IntAct" id="P50408">
    <property type="interactions" value="4"/>
</dbReference>
<dbReference type="STRING" id="10116.ENSRNOP00000009737"/>
<dbReference type="PhosphoSitePlus" id="P50408"/>
<dbReference type="jPOST" id="P50408"/>
<dbReference type="PaxDb" id="10116-ENSRNOP00000009737"/>
<dbReference type="GeneID" id="116664"/>
<dbReference type="KEGG" id="rno:116664"/>
<dbReference type="UCSC" id="RGD:621552">
    <property type="organism name" value="rat"/>
</dbReference>
<dbReference type="AGR" id="RGD:621552"/>
<dbReference type="CTD" id="9296"/>
<dbReference type="RGD" id="621552">
    <property type="gene designation" value="Atp6v1f"/>
</dbReference>
<dbReference type="eggNOG" id="KOG3432">
    <property type="taxonomic scope" value="Eukaryota"/>
</dbReference>
<dbReference type="HOGENOM" id="CLU_135754_0_0_1"/>
<dbReference type="InParanoid" id="P50408"/>
<dbReference type="OrthoDB" id="10261947at2759"/>
<dbReference type="PhylomeDB" id="P50408"/>
<dbReference type="TreeFam" id="TF300080"/>
<dbReference type="Reactome" id="R-RNO-1222556">
    <property type="pathway name" value="ROS and RNS production in phagocytes"/>
</dbReference>
<dbReference type="Reactome" id="R-RNO-77387">
    <property type="pathway name" value="Insulin receptor recycling"/>
</dbReference>
<dbReference type="Reactome" id="R-RNO-917977">
    <property type="pathway name" value="Transferrin endocytosis and recycling"/>
</dbReference>
<dbReference type="Reactome" id="R-RNO-9639288">
    <property type="pathway name" value="Amino acids regulate mTORC1"/>
</dbReference>
<dbReference type="Reactome" id="R-RNO-983712">
    <property type="pathway name" value="Ion channel transport"/>
</dbReference>
<dbReference type="PRO" id="PR:P50408"/>
<dbReference type="Proteomes" id="UP000002494">
    <property type="component" value="Chromosome 4"/>
</dbReference>
<dbReference type="Bgee" id="ENSRNOG00000007392">
    <property type="expression patterns" value="Expressed in cerebellum and 20 other cell types or tissues"/>
</dbReference>
<dbReference type="GO" id="GO:0030665">
    <property type="term" value="C:clathrin-coated vesicle membrane"/>
    <property type="evidence" value="ECO:0007669"/>
    <property type="project" value="UniProtKB-SubCell"/>
</dbReference>
<dbReference type="GO" id="GO:0098850">
    <property type="term" value="C:extrinsic component of synaptic vesicle membrane"/>
    <property type="evidence" value="ECO:0000314"/>
    <property type="project" value="SynGO"/>
</dbReference>
<dbReference type="GO" id="GO:0016020">
    <property type="term" value="C:membrane"/>
    <property type="evidence" value="ECO:0000266"/>
    <property type="project" value="RGD"/>
</dbReference>
<dbReference type="GO" id="GO:0033176">
    <property type="term" value="C:proton-transporting V-type ATPase complex"/>
    <property type="evidence" value="ECO:0000266"/>
    <property type="project" value="RGD"/>
</dbReference>
<dbReference type="GO" id="GO:0016471">
    <property type="term" value="C:vacuolar proton-transporting V-type ATPase complex"/>
    <property type="evidence" value="ECO:0000266"/>
    <property type="project" value="RGD"/>
</dbReference>
<dbReference type="GO" id="GO:0000221">
    <property type="term" value="C:vacuolar proton-transporting V-type ATPase, V1 domain"/>
    <property type="evidence" value="ECO:0000250"/>
    <property type="project" value="UniProtKB"/>
</dbReference>
<dbReference type="GO" id="GO:0046961">
    <property type="term" value="F:proton-transporting ATPase activity, rotational mechanism"/>
    <property type="evidence" value="ECO:0007669"/>
    <property type="project" value="InterPro"/>
</dbReference>
<dbReference type="GO" id="GO:0097401">
    <property type="term" value="P:synaptic vesicle lumen acidification"/>
    <property type="evidence" value="ECO:0000266"/>
    <property type="project" value="RGD"/>
</dbReference>
<dbReference type="FunFam" id="3.40.50.10580:FF:000001">
    <property type="entry name" value="V-type proton ATPase subunit F"/>
    <property type="match status" value="1"/>
</dbReference>
<dbReference type="Gene3D" id="3.40.50.10580">
    <property type="entry name" value="ATPase, V1 complex, subunit F"/>
    <property type="match status" value="1"/>
</dbReference>
<dbReference type="InterPro" id="IPR008218">
    <property type="entry name" value="ATPase_V1-cplx_f_g_su"/>
</dbReference>
<dbReference type="InterPro" id="IPR005772">
    <property type="entry name" value="ATPase_V1-cplx_fsu_euk"/>
</dbReference>
<dbReference type="InterPro" id="IPR036906">
    <property type="entry name" value="ATPase_V1_fsu_sf"/>
</dbReference>
<dbReference type="NCBIfam" id="TIGR01101">
    <property type="entry name" value="V_ATP_synt_F"/>
    <property type="match status" value="1"/>
</dbReference>
<dbReference type="PANTHER" id="PTHR13861:SF2">
    <property type="entry name" value="V-TYPE PROTON ATPASE SUBUNIT F"/>
    <property type="match status" value="1"/>
</dbReference>
<dbReference type="PANTHER" id="PTHR13861">
    <property type="entry name" value="VACUOLAR ATP SYNTHASE SUBUNIT F"/>
    <property type="match status" value="1"/>
</dbReference>
<dbReference type="Pfam" id="PF01990">
    <property type="entry name" value="ATP-synt_F"/>
    <property type="match status" value="1"/>
</dbReference>
<dbReference type="PIRSF" id="PIRSF015945">
    <property type="entry name" value="ATPase_V1_F_euk"/>
    <property type="match status" value="1"/>
</dbReference>
<dbReference type="SUPFAM" id="SSF159468">
    <property type="entry name" value="AtpF-like"/>
    <property type="match status" value="1"/>
</dbReference>
<accession>P50408</accession>
<protein>
    <recommendedName>
        <fullName>V-type proton ATPase subunit F</fullName>
        <shortName>V-ATPase subunit F</shortName>
    </recommendedName>
    <alternativeName>
        <fullName>V-ATPase 14 kDa subunit</fullName>
    </alternativeName>
    <alternativeName>
        <fullName>Vacuolar proton pump subunit F</fullName>
    </alternativeName>
</protein>
<proteinExistence type="evidence at protein level"/>
<reference key="1">
    <citation type="journal article" date="1996" name="J. Biol. Chem.">
        <title>Identification of a 14-kDa subunit associated with the catalytic sector of clathrin-coated vesicle H+-ATPase.</title>
        <authorList>
            <person name="Peng S.B."/>
            <person name="Crider B.P."/>
            <person name="Tsai S.J."/>
            <person name="Xie X.S."/>
            <person name="Stone D.K."/>
        </authorList>
    </citation>
    <scope>NUCLEOTIDE SEQUENCE [MRNA]</scope>
    <scope>PARTIAL PROTEIN SEQUENCE</scope>
    <source>
        <tissue>Brain</tissue>
    </source>
</reference>
<reference key="2">
    <citation type="submission" date="2007-04" db="UniProtKB">
        <authorList>
            <person name="Lubec G."/>
            <person name="Diao W."/>
        </authorList>
    </citation>
    <scope>PROTEIN SEQUENCE OF 31-41 AND 59-75</scope>
    <scope>IDENTIFICATION BY MASS SPECTROMETRY</scope>
    <source>
        <strain>Sprague-Dawley</strain>
        <tissue>Hippocampus</tissue>
    </source>
</reference>
<reference evidence="3 4 5 6 7 8" key="3">
    <citation type="journal article" date="2020" name="Science">
        <title>Structure of V-ATPase from the mammalian brain.</title>
        <authorList>
            <person name="Abbas Y.M."/>
            <person name="Wu D."/>
            <person name="Bueler S.A."/>
            <person name="Robinson C.V."/>
            <person name="Rubinstein J.L."/>
        </authorList>
    </citation>
    <scope>STRUCTURE BY ELECTRON MICROSCOPY (3.80 ANGSTROMS)</scope>
    <scope>FUNCTION</scope>
    <scope>IDENTIFICATION IN THE V-ATPASE COMPLEX</scope>
    <scope>SUBCELLULAR LOCATION</scope>
    <scope>IDENTIFICATION BY MASS SPECTROMETRY</scope>
    <scope>TISSUE SPECIFICITY</scope>
</reference>